<sequence length="107" mass="11977">MASTEEVSQERSENSIQVSMTKKPTFYARIGKRMFTGNEEKNPFDEVIITGLGNATKIAIGAASIMEKEDIGQIVKVQTAYFSSDRINRRIPKITIVLKKHPDFVAN</sequence>
<dbReference type="EC" id="3.1.-.-" evidence="3"/>
<dbReference type="EMBL" id="LN999944">
    <property type="protein sequence ID" value="CZT98311.1"/>
    <property type="molecule type" value="Genomic_DNA"/>
</dbReference>
<dbReference type="RefSeq" id="XP_001347348.1">
    <property type="nucleotide sequence ID" value="XM_001347312.1"/>
</dbReference>
<dbReference type="SMR" id="Q8IJX8"/>
<dbReference type="FunCoup" id="Q8IJX8">
    <property type="interactions" value="4"/>
</dbReference>
<dbReference type="IntAct" id="Q8IJX8">
    <property type="interactions" value="3"/>
</dbReference>
<dbReference type="STRING" id="36329.Q8IJX8"/>
<dbReference type="iPTMnet" id="Q8IJX8"/>
<dbReference type="PaxDb" id="5833-PF10_0063"/>
<dbReference type="EnsemblProtists" id="CZT98311">
    <property type="protein sequence ID" value="CZT98311"/>
    <property type="gene ID" value="PF3D7_1006200"/>
</dbReference>
<dbReference type="GeneID" id="810221"/>
<dbReference type="KEGG" id="pfa:PF3D7_1006200"/>
<dbReference type="VEuPathDB" id="PlasmoDB:PF3D7_1006200"/>
<dbReference type="HOGENOM" id="CLU_2215207_0_0_1"/>
<dbReference type="InParanoid" id="Q8IJX8"/>
<dbReference type="OMA" id="ANDHLSY"/>
<dbReference type="OrthoDB" id="359342at2759"/>
<dbReference type="PhylomeDB" id="Q8IJX8"/>
<dbReference type="Proteomes" id="UP000001450">
    <property type="component" value="Chromosome 10"/>
</dbReference>
<dbReference type="GO" id="GO:0000781">
    <property type="term" value="C:chromosome, telomeric region"/>
    <property type="evidence" value="ECO:0007669"/>
    <property type="project" value="UniProtKB-SubCell"/>
</dbReference>
<dbReference type="GO" id="GO:0005737">
    <property type="term" value="C:cytoplasm"/>
    <property type="evidence" value="ECO:0007669"/>
    <property type="project" value="UniProtKB-SubCell"/>
</dbReference>
<dbReference type="GO" id="GO:0005634">
    <property type="term" value="C:nucleus"/>
    <property type="evidence" value="ECO:0000314"/>
    <property type="project" value="GeneDB"/>
</dbReference>
<dbReference type="GO" id="GO:0003677">
    <property type="term" value="F:DNA binding"/>
    <property type="evidence" value="ECO:0000314"/>
    <property type="project" value="GeneDB"/>
</dbReference>
<dbReference type="GO" id="GO:0046872">
    <property type="term" value="F:metal ion binding"/>
    <property type="evidence" value="ECO:0007669"/>
    <property type="project" value="UniProtKB-KW"/>
</dbReference>
<dbReference type="GO" id="GO:0004518">
    <property type="term" value="F:nuclease activity"/>
    <property type="evidence" value="ECO:0007669"/>
    <property type="project" value="UniProtKB-KW"/>
</dbReference>
<dbReference type="GO" id="GO:0003723">
    <property type="term" value="F:RNA binding"/>
    <property type="evidence" value="ECO:0000314"/>
    <property type="project" value="GeneDB"/>
</dbReference>
<dbReference type="FunFam" id="3.30.110.20:FF:000007">
    <property type="entry name" value="DNA/RNA-binding protein Alba 3"/>
    <property type="match status" value="1"/>
</dbReference>
<dbReference type="Gene3D" id="3.30.110.20">
    <property type="entry name" value="Alba-like domain"/>
    <property type="match status" value="1"/>
</dbReference>
<dbReference type="InterPro" id="IPR036882">
    <property type="entry name" value="Alba-like_dom_sf"/>
</dbReference>
<dbReference type="InterPro" id="IPR002775">
    <property type="entry name" value="DNA/RNA-bd_Alba-like"/>
</dbReference>
<dbReference type="InterPro" id="IPR014560">
    <property type="entry name" value="UCP030333_Alba"/>
</dbReference>
<dbReference type="PANTHER" id="PTHR31947">
    <property type="entry name" value="DNA/RNA-BINDING PROTEIN ALBA 3"/>
    <property type="match status" value="1"/>
</dbReference>
<dbReference type="PANTHER" id="PTHR31947:SF36">
    <property type="entry name" value="DNA_RNA-BINDING PROTEIN ALBA-LIKE DOMAIN-CONTAINING PROTEIN"/>
    <property type="match status" value="1"/>
</dbReference>
<dbReference type="Pfam" id="PF01918">
    <property type="entry name" value="Alba"/>
    <property type="match status" value="1"/>
</dbReference>
<dbReference type="SUPFAM" id="SSF82704">
    <property type="entry name" value="AlbA-like"/>
    <property type="match status" value="1"/>
</dbReference>
<name>ALBA3_PLAF7</name>
<proteinExistence type="evidence at protein level"/>
<evidence type="ECO:0000269" key="1">
    <source>
    </source>
</evidence>
<evidence type="ECO:0000269" key="2">
    <source>
    </source>
</evidence>
<evidence type="ECO:0000269" key="3">
    <source>
    </source>
</evidence>
<evidence type="ECO:0000303" key="4">
    <source>
    </source>
</evidence>
<evidence type="ECO:0000303" key="5">
    <source>
    </source>
</evidence>
<evidence type="ECO:0000305" key="6"/>
<evidence type="ECO:0000312" key="7">
    <source>
        <dbReference type="EMBL" id="CZT98311.1"/>
    </source>
</evidence>
<evidence type="ECO:0000312" key="8">
    <source>
        <dbReference type="Proteomes" id="UP000001450"/>
    </source>
</evidence>
<protein>
    <recommendedName>
        <fullName>Endonuclease ALBA3</fullName>
        <shortName evidence="4 5">PfAlba3</shortName>
        <ecNumber evidence="3">3.1.-.-</ecNumber>
    </recommendedName>
    <alternativeName>
        <fullName evidence="7">DNA/RNA-binding protein Alba 3</fullName>
    </alternativeName>
</protein>
<comment type="function">
    <text evidence="1 2 3">Possesses DNA-binding and endonuclease activities (PubMed:22006844, PubMed:22167473, PubMed:36947546). Binds DNA cooperatively in sequence-independent manner at the DNA minor groove (PubMed:22006844, PubMed:36947546). Exhibits apurinic/apyrimidinic site-driven endonuclease activity (PubMed:36947546). Binds RNA; shows high affinity for poly(A) and a lower affinity for poly(U) templates (PubMed:22167473). In vitro, prevents transcription after DNA binding (PubMed:22006844). Associates with the telomeric region, the subtelomeric TARE6 repeat sequence and the var gene promoters (PubMed:22006844).</text>
</comment>
<comment type="cofactor">
    <cofactor evidence="3">
        <name>a divalent metal cation</name>
        <dbReference type="ChEBI" id="CHEBI:60240"/>
    </cofactor>
</comment>
<comment type="activity regulation">
    <text evidence="1 3">Mild acetylation lowers protein interaction with DNA and high acetylation abolishes DNA-binding activity (PubMed:22006844). DNA binding and endonuclease activity is modulated via deacetylation of Lys-23 by Sir2A (PubMed:22006844, PubMed:36947546). Inhibited in the presence of EDTA and EGTA (PubMed:36947546).</text>
</comment>
<comment type="biophysicochemical properties">
    <kinetics>
        <KM evidence="3">9.35E-5 uM for supercoiled pBR322 DNA</KM>
        <text evidence="3">kcat is 0.00007085 h(-1) for supercoiled pBR322 DNA.</text>
    </kinetics>
    <phDependence>
        <text evidence="3">Optimum pH is 7.5-9.0.</text>
    </phDependence>
    <temperatureDependence>
        <text evidence="3">Active from 4 to 70 degrees Celsius.</text>
    </temperatureDependence>
</comment>
<comment type="subunit">
    <text evidence="1 2 3">Homodimer (PubMed:22167473). Interacts (acetylated and unacetylated) with Sir2A (PubMed:22006844, PubMed:36947546).</text>
</comment>
<comment type="subcellular location">
    <subcellularLocation>
        <location evidence="1 3">Nucleus</location>
    </subcellularLocation>
    <subcellularLocation>
        <location evidence="1">Chromosome</location>
    </subcellularLocation>
    <subcellularLocation>
        <location evidence="1">Chromosome</location>
        <location evidence="1">Telomere</location>
    </subcellularLocation>
    <subcellularLocation>
        <location evidence="1">Cytoplasm</location>
    </subcellularLocation>
</comment>
<comment type="developmental stage">
    <text evidence="1 3">Expressed during all the asexual blood stages: in the ring form, trophozoites and schizonts (at protein level).</text>
</comment>
<comment type="PTM">
    <text evidence="1 3">Acetylated (PubMed:22006844, PubMed:36947546). Exists in both acetylated and unacetylated forms but predominantly in an acetylated form (PubMed:22006844). Deacetylated by Sir2A (PubMed:22006844, PubMed:36947546).</text>
</comment>
<comment type="similarity">
    <text evidence="6">Belongs to the histone-like Alba family.</text>
</comment>
<reference evidence="8" key="1">
    <citation type="journal article" date="2002" name="Nature">
        <title>Genome sequence of the human malaria parasite Plasmodium falciparum.</title>
        <authorList>
            <person name="Gardner M.J."/>
            <person name="Hall N."/>
            <person name="Fung E."/>
            <person name="White O."/>
            <person name="Berriman M."/>
            <person name="Hyman R.W."/>
            <person name="Carlton J.M."/>
            <person name="Pain A."/>
            <person name="Nelson K.E."/>
            <person name="Bowman S."/>
            <person name="Paulsen I.T."/>
            <person name="James K.D."/>
            <person name="Eisen J.A."/>
            <person name="Rutherford K.M."/>
            <person name="Salzberg S.L."/>
            <person name="Craig A."/>
            <person name="Kyes S."/>
            <person name="Chan M.-S."/>
            <person name="Nene V."/>
            <person name="Shallom S.J."/>
            <person name="Suh B."/>
            <person name="Peterson J."/>
            <person name="Angiuoli S."/>
            <person name="Pertea M."/>
            <person name="Allen J."/>
            <person name="Selengut J."/>
            <person name="Haft D."/>
            <person name="Mather M.W."/>
            <person name="Vaidya A.B."/>
            <person name="Martin D.M.A."/>
            <person name="Fairlamb A.H."/>
            <person name="Fraunholz M.J."/>
            <person name="Roos D.S."/>
            <person name="Ralph S.A."/>
            <person name="McFadden G.I."/>
            <person name="Cummings L.M."/>
            <person name="Subramanian G.M."/>
            <person name="Mungall C."/>
            <person name="Venter J.C."/>
            <person name="Carucci D.J."/>
            <person name="Hoffman S.L."/>
            <person name="Newbold C."/>
            <person name="Davis R.W."/>
            <person name="Fraser C.M."/>
            <person name="Barrell B.G."/>
        </authorList>
    </citation>
    <scope>NUCLEOTIDE SEQUENCE [LARGE SCALE GENOMIC DNA]</scope>
    <source>
        <strain evidence="8">3D7</strain>
    </source>
</reference>
<reference evidence="6" key="2">
    <citation type="journal article" date="2012" name="Nucleic Acids Res.">
        <title>Identification and molecular characterization of an Alba-family protein from human malaria parasite Plasmodium falciparum.</title>
        <authorList>
            <person name="Goyal M."/>
            <person name="Alam A."/>
            <person name="Iqbal M.S."/>
            <person name="Dey S."/>
            <person name="Bindu S."/>
            <person name="Pal C."/>
            <person name="Banerjee A."/>
            <person name="Chakrabarti S."/>
            <person name="Bandyopadhyay U."/>
        </authorList>
    </citation>
    <scope>FUNCTION</scope>
    <scope>ACTIVITY REGULATION</scope>
    <scope>INTERACTION WITH SIR2A</scope>
    <scope>SUBCELLULAR LOCATION</scope>
    <scope>DEVELOPMENTAL STAGE</scope>
    <scope>ACETYLATION</scope>
</reference>
<reference evidence="6" key="3">
    <citation type="journal article" date="2012" name="Nucleic Acids Res.">
        <title>PfAlbas constitute a new eukaryotic DNA/RNA-binding protein family in malaria parasites.</title>
        <authorList>
            <person name="Chene A."/>
            <person name="Vembar S.S."/>
            <person name="Riviere L."/>
            <person name="Lopez-Rubio J.J."/>
            <person name="Claes A."/>
            <person name="Siegel T.N."/>
            <person name="Sakamoto H."/>
            <person name="Scheidig-Benatar C."/>
            <person name="Hernandez-Rivas R."/>
            <person name="Scherf A."/>
        </authorList>
    </citation>
    <scope>FUNCTION</scope>
    <scope>SUBUNIT</scope>
</reference>
<reference evidence="6" key="4">
    <citation type="journal article" date="2023" name="Cell Rep.">
        <title>Nuclease activity of Plasmodium falciparum Alba family protein PfAlba3.</title>
        <authorList>
            <person name="Banerjee C."/>
            <person name="Nag S."/>
            <person name="Goyal M."/>
            <person name="Saha D."/>
            <person name="Siddiqui A.A."/>
            <person name="Mazumder S."/>
            <person name="Debsharma S."/>
            <person name="Pramanik S."/>
            <person name="Bandyopadhyay U."/>
        </authorList>
    </citation>
    <scope>FUNCTION</scope>
    <scope>COFACTOR</scope>
    <scope>CATALYTIC ACTIVITY</scope>
    <scope>ACTIVITY REGULATION</scope>
    <scope>BIOPHYSICOCHEMICAL PROPERTIES</scope>
    <scope>INTERACTION WITH SIR2A</scope>
    <scope>SUBCELLULAR LOCATION</scope>
    <scope>DEVELOPMENTAL STAGE</scope>
    <scope>ACETYLATION AT LYS-23 AND LYS-32</scope>
    <scope>MUTAGENESIS OF 22-LYS-LYS-23; LYS-22; LYS-23; PRO-24; LYS-32; LYS-41; ASN-54; LYS-57; LYS-68; LYS-76; ARG-89; LYS-93; LYS-99 AND LYS-100</scope>
</reference>
<organism evidence="8">
    <name type="scientific">Plasmodium falciparum (isolate 3D7)</name>
    <dbReference type="NCBI Taxonomy" id="36329"/>
    <lineage>
        <taxon>Eukaryota</taxon>
        <taxon>Sar</taxon>
        <taxon>Alveolata</taxon>
        <taxon>Apicomplexa</taxon>
        <taxon>Aconoidasida</taxon>
        <taxon>Haemosporida</taxon>
        <taxon>Plasmodiidae</taxon>
        <taxon>Plasmodium</taxon>
        <taxon>Plasmodium (Laverania)</taxon>
    </lineage>
</organism>
<keyword id="KW-0007">Acetylation</keyword>
<keyword id="KW-0158">Chromosome</keyword>
<keyword id="KW-0963">Cytoplasm</keyword>
<keyword id="KW-0238">DNA-binding</keyword>
<keyword id="KW-0378">Hydrolase</keyword>
<keyword id="KW-0479">Metal-binding</keyword>
<keyword id="KW-0540">Nuclease</keyword>
<keyword id="KW-0539">Nucleus</keyword>
<keyword id="KW-1185">Reference proteome</keyword>
<keyword id="KW-0694">RNA-binding</keyword>
<keyword id="KW-0779">Telomere</keyword>
<keyword id="KW-0804">Transcription</keyword>
<keyword id="KW-0805">Transcription regulation</keyword>
<accession>Q8IJX8</accession>
<gene>
    <name evidence="6" type="primary">ALBA3</name>
    <name evidence="7" type="ORF">PF3D7_1006200</name>
</gene>
<feature type="chain" id="PRO_0000459063" description="Endonuclease ALBA3">
    <location>
        <begin position="1"/>
        <end position="107"/>
    </location>
</feature>
<feature type="modified residue" description="N6-acetyllysine" evidence="3">
    <location>
        <position position="23"/>
    </location>
</feature>
<feature type="modified residue" description="N6-acetyllysine" evidence="3">
    <location>
        <position position="32"/>
    </location>
</feature>
<feature type="mutagenesis site" description="Results in a significant loss of the binding with DNA, loss of cooperativity and nuclease activity." evidence="3">
    <original>KK</original>
    <variation>RR</variation>
    <location>
        <begin position="22"/>
        <end position="23"/>
    </location>
</feature>
<feature type="mutagenesis site" description="Results in a significant loss of nuclease activity." evidence="3">
    <original>K</original>
    <variation>R</variation>
    <location>
        <position position="22"/>
    </location>
</feature>
<feature type="mutagenesis site" description="Results in a significant loss of nuclease activity." evidence="3">
    <original>K</original>
    <variation>R</variation>
    <location>
        <position position="23"/>
    </location>
</feature>
<feature type="mutagenesis site" description="No effect on nuclease activity." evidence="3">
    <original>P</original>
    <variation>A</variation>
    <location>
        <position position="24"/>
    </location>
</feature>
<feature type="mutagenesis site" description="No effect on nuclease activity; when associated with A-41; A-76; A-99 and A-100." evidence="3">
    <original>K</original>
    <variation>A</variation>
    <location>
        <position position="32"/>
    </location>
</feature>
<feature type="mutagenesis site" description="No effect on nuclease activity; when associated with A-32; A-76; A-99 and A-100." evidence="3">
    <original>K</original>
    <variation>A</variation>
    <location>
        <position position="41"/>
    </location>
</feature>
<feature type="mutagenesis site" description="No effect on nuclease activity." evidence="3">
    <original>N</original>
    <variation>A</variation>
    <location>
        <position position="54"/>
    </location>
</feature>
<feature type="mutagenesis site" description="No effect on nuclease activity; when associated with A-68 and A-93." evidence="3">
    <original>K</original>
    <variation>A</variation>
    <location>
        <position position="57"/>
    </location>
</feature>
<feature type="mutagenesis site" description="No effect on nuclease activity; when associated with A-57 and A-93." evidence="3">
    <original>K</original>
    <variation>A</variation>
    <location>
        <position position="68"/>
    </location>
</feature>
<feature type="mutagenesis site" description="No effect on nuclease activity; when associated with A-32; A-41; A-99 and A-100." evidence="3">
    <original>K</original>
    <variation>A</variation>
    <location>
        <position position="76"/>
    </location>
</feature>
<feature type="mutagenesis site" description="No effect on nuclease activity." evidence="3">
    <original>R</original>
    <variation>A</variation>
    <location>
        <position position="89"/>
    </location>
</feature>
<feature type="mutagenesis site" description="No effect on nuclease activity; when associated with A-57 and A-68." evidence="3">
    <original>K</original>
    <variation>A</variation>
    <location>
        <position position="93"/>
    </location>
</feature>
<feature type="mutagenesis site" description="No effect on nuclease activity; when associated with A-32; A-41; A-76 and A-100." evidence="3">
    <original>K</original>
    <variation>A</variation>
    <location>
        <position position="99"/>
    </location>
</feature>
<feature type="mutagenesis site" description="No effect on nuclease activity; when associated with A-32; A-41; A-76 and A-99." evidence="3">
    <original>K</original>
    <variation>A</variation>
    <location>
        <position position="100"/>
    </location>
</feature>